<keyword id="KW-0028">Amino-acid biosynthesis</keyword>
<keyword id="KW-0963">Cytoplasm</keyword>
<keyword id="KW-0368">Histidine biosynthesis</keyword>
<keyword id="KW-0413">Isomerase</keyword>
<keyword id="KW-1185">Reference proteome</keyword>
<dbReference type="EC" id="5.3.1.16" evidence="1"/>
<dbReference type="EMBL" id="AP006840">
    <property type="protein sequence ID" value="BAD41819.1"/>
    <property type="status" value="ALT_INIT"/>
    <property type="molecule type" value="Genomic_DNA"/>
</dbReference>
<dbReference type="RefSeq" id="WP_043714220.1">
    <property type="nucleotide sequence ID" value="NC_006177.1"/>
</dbReference>
<dbReference type="SMR" id="Q67KH9"/>
<dbReference type="STRING" id="292459.STH2834"/>
<dbReference type="KEGG" id="sth:STH2834"/>
<dbReference type="eggNOG" id="COG0106">
    <property type="taxonomic scope" value="Bacteria"/>
</dbReference>
<dbReference type="HOGENOM" id="CLU_048577_1_1_9"/>
<dbReference type="OrthoDB" id="9781903at2"/>
<dbReference type="UniPathway" id="UPA00031">
    <property type="reaction ID" value="UER00009"/>
</dbReference>
<dbReference type="Proteomes" id="UP000000417">
    <property type="component" value="Chromosome"/>
</dbReference>
<dbReference type="GO" id="GO:0005737">
    <property type="term" value="C:cytoplasm"/>
    <property type="evidence" value="ECO:0007669"/>
    <property type="project" value="UniProtKB-SubCell"/>
</dbReference>
<dbReference type="GO" id="GO:0003949">
    <property type="term" value="F:1-(5-phosphoribosyl)-5-[(5-phosphoribosylamino)methylideneamino]imidazole-4-carboxamide isomerase activity"/>
    <property type="evidence" value="ECO:0007669"/>
    <property type="project" value="UniProtKB-UniRule"/>
</dbReference>
<dbReference type="GO" id="GO:0000105">
    <property type="term" value="P:L-histidine biosynthetic process"/>
    <property type="evidence" value="ECO:0007669"/>
    <property type="project" value="UniProtKB-UniRule"/>
</dbReference>
<dbReference type="GO" id="GO:0000162">
    <property type="term" value="P:L-tryptophan biosynthetic process"/>
    <property type="evidence" value="ECO:0007669"/>
    <property type="project" value="TreeGrafter"/>
</dbReference>
<dbReference type="CDD" id="cd04732">
    <property type="entry name" value="HisA"/>
    <property type="match status" value="1"/>
</dbReference>
<dbReference type="FunFam" id="3.20.20.70:FF:000009">
    <property type="entry name" value="1-(5-phosphoribosyl)-5-[(5-phosphoribosylamino)methylideneamino] imidazole-4-carboxamide isomerase"/>
    <property type="match status" value="1"/>
</dbReference>
<dbReference type="Gene3D" id="3.20.20.70">
    <property type="entry name" value="Aldolase class I"/>
    <property type="match status" value="1"/>
</dbReference>
<dbReference type="HAMAP" id="MF_01014">
    <property type="entry name" value="HisA"/>
    <property type="match status" value="1"/>
</dbReference>
<dbReference type="InterPro" id="IPR013785">
    <property type="entry name" value="Aldolase_TIM"/>
</dbReference>
<dbReference type="InterPro" id="IPR006062">
    <property type="entry name" value="His_biosynth"/>
</dbReference>
<dbReference type="InterPro" id="IPR006063">
    <property type="entry name" value="HisA_bact_arch"/>
</dbReference>
<dbReference type="InterPro" id="IPR044524">
    <property type="entry name" value="Isoase_HisA-like"/>
</dbReference>
<dbReference type="InterPro" id="IPR023016">
    <property type="entry name" value="Isoase_HisA-like_bact"/>
</dbReference>
<dbReference type="InterPro" id="IPR011060">
    <property type="entry name" value="RibuloseP-bd_barrel"/>
</dbReference>
<dbReference type="NCBIfam" id="TIGR00007">
    <property type="entry name" value="1-(5-phosphoribosyl)-5-[(5-phosphoribosylamino)methylideneamino]imidazole-4-carboxamide isomerase"/>
    <property type="match status" value="1"/>
</dbReference>
<dbReference type="PANTHER" id="PTHR43090">
    <property type="entry name" value="1-(5-PHOSPHORIBOSYL)-5-[(5-PHOSPHORIBOSYLAMINO)METHYLIDENEAMINO] IMIDAZOLE-4-CARBOXAMIDE ISOMERASE"/>
    <property type="match status" value="1"/>
</dbReference>
<dbReference type="PANTHER" id="PTHR43090:SF2">
    <property type="entry name" value="1-(5-PHOSPHORIBOSYL)-5-[(5-PHOSPHORIBOSYLAMINO)METHYLIDENEAMINO] IMIDAZOLE-4-CARBOXAMIDE ISOMERASE"/>
    <property type="match status" value="1"/>
</dbReference>
<dbReference type="Pfam" id="PF00977">
    <property type="entry name" value="His_biosynth"/>
    <property type="match status" value="1"/>
</dbReference>
<dbReference type="SUPFAM" id="SSF51366">
    <property type="entry name" value="Ribulose-phoshate binding barrel"/>
    <property type="match status" value="1"/>
</dbReference>
<evidence type="ECO:0000255" key="1">
    <source>
        <dbReference type="HAMAP-Rule" id="MF_01014"/>
    </source>
</evidence>
<evidence type="ECO:0000305" key="2"/>
<sequence>MRLDLYPAIDLKDGQVVRLRQGRMDEATVYGVDPVRIAARWAEAGARWIHVVDLDGALRGRPQNAAAVRAIVEALRQRHPGVRVQLGGGLRTLEALEAALALGVSRAIIGTSALEGDVAARAVARFGPDRVAVSIDARGGFVAARGWVEVTRVRAVDLAVRMREVGVRTVVYTDIATDGMLTGPNFAELEMMGRTGLDVIASGGISSLEDIRRLTEIPGVAGAIIGRALYTGAVDLAEALSLCGETRDT</sequence>
<name>HIS4_SYMTH</name>
<feature type="chain" id="PRO_0000142062" description="1-(5-phosphoribosyl)-5-[(5-phosphoribosylamino)methylideneamino] imidazole-4-carboxamide isomerase">
    <location>
        <begin position="1"/>
        <end position="249"/>
    </location>
</feature>
<feature type="active site" description="Proton acceptor" evidence="1">
    <location>
        <position position="10"/>
    </location>
</feature>
<feature type="active site" description="Proton donor" evidence="1">
    <location>
        <position position="136"/>
    </location>
</feature>
<protein>
    <recommendedName>
        <fullName evidence="1">1-(5-phosphoribosyl)-5-[(5-phosphoribosylamino)methylideneamino] imidazole-4-carboxamide isomerase</fullName>
        <ecNumber evidence="1">5.3.1.16</ecNumber>
    </recommendedName>
    <alternativeName>
        <fullName evidence="1">Phosphoribosylformimino-5-aminoimidazole carboxamide ribotide isomerase</fullName>
    </alternativeName>
</protein>
<accession>Q67KH9</accession>
<gene>
    <name evidence="1" type="primary">hisA</name>
    <name type="ordered locus">STH2834</name>
</gene>
<reference key="1">
    <citation type="journal article" date="2004" name="Nucleic Acids Res.">
        <title>Genome sequence of Symbiobacterium thermophilum, an uncultivable bacterium that depends on microbial commensalism.</title>
        <authorList>
            <person name="Ueda K."/>
            <person name="Yamashita A."/>
            <person name="Ishikawa J."/>
            <person name="Shimada M."/>
            <person name="Watsuji T."/>
            <person name="Morimura K."/>
            <person name="Ikeda H."/>
            <person name="Hattori M."/>
            <person name="Beppu T."/>
        </authorList>
    </citation>
    <scope>NUCLEOTIDE SEQUENCE [LARGE SCALE GENOMIC DNA]</scope>
    <source>
        <strain>DSM 24528 / JCM 14929 / IAM 14863 / T</strain>
    </source>
</reference>
<proteinExistence type="inferred from homology"/>
<organism>
    <name type="scientific">Symbiobacterium thermophilum (strain DSM 24528 / JCM 14929 / IAM 14863 / T)</name>
    <dbReference type="NCBI Taxonomy" id="292459"/>
    <lineage>
        <taxon>Bacteria</taxon>
        <taxon>Bacillati</taxon>
        <taxon>Bacillota</taxon>
        <taxon>Clostridia</taxon>
        <taxon>Eubacteriales</taxon>
        <taxon>Symbiobacteriaceae</taxon>
        <taxon>Symbiobacterium</taxon>
    </lineage>
</organism>
<comment type="catalytic activity">
    <reaction evidence="1">
        <text>1-(5-phospho-beta-D-ribosyl)-5-[(5-phospho-beta-D-ribosylamino)methylideneamino]imidazole-4-carboxamide = 5-[(5-phospho-1-deoxy-D-ribulos-1-ylimino)methylamino]-1-(5-phospho-beta-D-ribosyl)imidazole-4-carboxamide</text>
        <dbReference type="Rhea" id="RHEA:15469"/>
        <dbReference type="ChEBI" id="CHEBI:58435"/>
        <dbReference type="ChEBI" id="CHEBI:58525"/>
        <dbReference type="EC" id="5.3.1.16"/>
    </reaction>
</comment>
<comment type="pathway">
    <text evidence="1">Amino-acid biosynthesis; L-histidine biosynthesis; L-histidine from 5-phospho-alpha-D-ribose 1-diphosphate: step 4/9.</text>
</comment>
<comment type="subcellular location">
    <subcellularLocation>
        <location evidence="1">Cytoplasm</location>
    </subcellularLocation>
</comment>
<comment type="similarity">
    <text evidence="1">Belongs to the HisA/HisF family.</text>
</comment>
<comment type="sequence caution" evidence="2">
    <conflict type="erroneous initiation">
        <sequence resource="EMBL-CDS" id="BAD41819"/>
    </conflict>
</comment>